<dbReference type="EMBL" id="M19129">
    <property type="protein sequence ID" value="AAA23055.1"/>
    <property type="molecule type" value="Genomic_DNA"/>
</dbReference>
<dbReference type="EMBL" id="AE005673">
    <property type="protein sequence ID" value="AAK25508.1"/>
    <property type="molecule type" value="Genomic_DNA"/>
</dbReference>
<dbReference type="PIR" id="A43664">
    <property type="entry name" value="A43664"/>
</dbReference>
<dbReference type="RefSeq" id="NP_422340.1">
    <property type="nucleotide sequence ID" value="NC_002696.2"/>
</dbReference>
<dbReference type="RefSeq" id="WP_010921375.1">
    <property type="nucleotide sequence ID" value="NC_002696.2"/>
</dbReference>
<dbReference type="STRING" id="190650.CC_3546"/>
<dbReference type="EnsemblBacteria" id="AAK25508">
    <property type="protein sequence ID" value="AAK25508"/>
    <property type="gene ID" value="CC_3546"/>
</dbReference>
<dbReference type="KEGG" id="ccr:CC_3546"/>
<dbReference type="PATRIC" id="fig|190650.5.peg.3551"/>
<dbReference type="eggNOG" id="COG5425">
    <property type="taxonomic scope" value="Bacteria"/>
</dbReference>
<dbReference type="HOGENOM" id="CLU_145215_1_0_5"/>
<dbReference type="BioCyc" id="CAULO:CC3546-MONOMER"/>
<dbReference type="UniPathway" id="UPA00035"/>
<dbReference type="Proteomes" id="UP000001816">
    <property type="component" value="Chromosome"/>
</dbReference>
<dbReference type="GO" id="GO:0000162">
    <property type="term" value="P:L-tryptophan biosynthetic process"/>
    <property type="evidence" value="ECO:0007669"/>
    <property type="project" value="UniProtKB-UniPathway"/>
</dbReference>
<dbReference type="InterPro" id="IPR009354">
    <property type="entry name" value="Usg"/>
</dbReference>
<dbReference type="Pfam" id="PF06233">
    <property type="entry name" value="Usg"/>
    <property type="match status" value="1"/>
</dbReference>
<keyword id="KW-0028">Amino-acid biosynthesis</keyword>
<keyword id="KW-0057">Aromatic amino acid biosynthesis</keyword>
<keyword id="KW-1185">Reference proteome</keyword>
<keyword id="KW-0822">Tryptophan biosynthesis</keyword>
<gene>
    <name type="primary">usg</name>
    <name type="ordered locus">CC_3546</name>
</gene>
<protein>
    <recommendedName>
        <fullName>Protein usg</fullName>
    </recommendedName>
</protein>
<name>USG_CAUVC</name>
<accession>P12288</accession>
<reference key="1">
    <citation type="journal article" date="1988" name="J. Bacteriol.">
        <title>Structure of the Caulobacter crescentus trpFBA operon.</title>
        <authorList>
            <person name="Ross C.M."/>
            <person name="Winkler M.E."/>
        </authorList>
    </citation>
    <scope>NUCLEOTIDE SEQUENCE [GENOMIC DNA]</scope>
    <source>
        <strain>ATCC 19089 / CIP 103742 / CB 15</strain>
    </source>
</reference>
<reference key="2">
    <citation type="journal article" date="2001" name="Proc. Natl. Acad. Sci. U.S.A.">
        <title>Complete genome sequence of Caulobacter crescentus.</title>
        <authorList>
            <person name="Nierman W.C."/>
            <person name="Feldblyum T.V."/>
            <person name="Laub M.T."/>
            <person name="Paulsen I.T."/>
            <person name="Nelson K.E."/>
            <person name="Eisen J.A."/>
            <person name="Heidelberg J.F."/>
            <person name="Alley M.R.K."/>
            <person name="Ohta N."/>
            <person name="Maddock J.R."/>
            <person name="Potocka I."/>
            <person name="Nelson W.C."/>
            <person name="Newton A."/>
            <person name="Stephens C."/>
            <person name="Phadke N.D."/>
            <person name="Ely B."/>
            <person name="DeBoy R.T."/>
            <person name="Dodson R.J."/>
            <person name="Durkin A.S."/>
            <person name="Gwinn M.L."/>
            <person name="Haft D.H."/>
            <person name="Kolonay J.F."/>
            <person name="Smit J."/>
            <person name="Craven M.B."/>
            <person name="Khouri H.M."/>
            <person name="Shetty J."/>
            <person name="Berry K.J."/>
            <person name="Utterback T.R."/>
            <person name="Tran K."/>
            <person name="Wolf A.M."/>
            <person name="Vamathevan J.J."/>
            <person name="Ermolaeva M.D."/>
            <person name="White O."/>
            <person name="Salzberg S.L."/>
            <person name="Venter J.C."/>
            <person name="Shapiro L."/>
            <person name="Fraser C.M."/>
        </authorList>
    </citation>
    <scope>NUCLEOTIDE SEQUENCE [LARGE SCALE GENOMIC DNA]</scope>
    <source>
        <strain>ATCC 19089 / CIP 103742 / CB 15</strain>
    </source>
</reference>
<organism>
    <name type="scientific">Caulobacter vibrioides (strain ATCC 19089 / CIP 103742 / CB 15)</name>
    <name type="common">Caulobacter crescentus</name>
    <dbReference type="NCBI Taxonomy" id="190650"/>
    <lineage>
        <taxon>Bacteria</taxon>
        <taxon>Pseudomonadati</taxon>
        <taxon>Pseudomonadota</taxon>
        <taxon>Alphaproteobacteria</taxon>
        <taxon>Caulobacterales</taxon>
        <taxon>Caulobacteraceae</taxon>
        <taxon>Caulobacter</taxon>
    </lineage>
</organism>
<feature type="chain" id="PRO_0000065726" description="Protein usg">
    <location>
        <begin position="1"/>
        <end position="89"/>
    </location>
</feature>
<sequence length="89" mass="10358">MASKAFELQMMGYGLTTAEIHYHMPDHPGLLQLYVWQEYDLAPKFPTLKGFLDFWAKELDGVLHSVRVAHNRLISPREWRVVNGVFTLQ</sequence>
<proteinExistence type="predicted"/>
<comment type="function">
    <text>Probably necessary for the cotranslation of trpF. It may also function as a subunit or stabilizer of phosphoribosylanthranilate isomerase (trpF).</text>
</comment>
<comment type="pathway">
    <text>Amino-acid biosynthesis; L-tryptophan biosynthesis.</text>
</comment>